<dbReference type="EC" id="6.3.1.13" evidence="1"/>
<dbReference type="EMBL" id="CP001819">
    <property type="protein sequence ID" value="ACZ22019.1"/>
    <property type="molecule type" value="Genomic_DNA"/>
</dbReference>
<dbReference type="RefSeq" id="WP_012867088.1">
    <property type="nucleotide sequence ID" value="NC_013521.1"/>
</dbReference>
<dbReference type="SMR" id="D1BHU9"/>
<dbReference type="STRING" id="446469.Sked_20970"/>
<dbReference type="KEGG" id="ske:Sked_20970"/>
<dbReference type="eggNOG" id="COG0215">
    <property type="taxonomic scope" value="Bacteria"/>
</dbReference>
<dbReference type="HOGENOM" id="CLU_013528_0_0_11"/>
<dbReference type="OrthoDB" id="9815130at2"/>
<dbReference type="Proteomes" id="UP000000322">
    <property type="component" value="Chromosome"/>
</dbReference>
<dbReference type="GO" id="GO:0005829">
    <property type="term" value="C:cytosol"/>
    <property type="evidence" value="ECO:0007669"/>
    <property type="project" value="TreeGrafter"/>
</dbReference>
<dbReference type="GO" id="GO:0005524">
    <property type="term" value="F:ATP binding"/>
    <property type="evidence" value="ECO:0007669"/>
    <property type="project" value="UniProtKB-KW"/>
</dbReference>
<dbReference type="GO" id="GO:0035446">
    <property type="term" value="F:cysteine-glucosaminylinositol ligase activity"/>
    <property type="evidence" value="ECO:0007669"/>
    <property type="project" value="UniProtKB-UniRule"/>
</dbReference>
<dbReference type="GO" id="GO:0004817">
    <property type="term" value="F:cysteine-tRNA ligase activity"/>
    <property type="evidence" value="ECO:0007669"/>
    <property type="project" value="TreeGrafter"/>
</dbReference>
<dbReference type="GO" id="GO:0008270">
    <property type="term" value="F:zinc ion binding"/>
    <property type="evidence" value="ECO:0007669"/>
    <property type="project" value="UniProtKB-UniRule"/>
</dbReference>
<dbReference type="GO" id="GO:0006423">
    <property type="term" value="P:cysteinyl-tRNA aminoacylation"/>
    <property type="evidence" value="ECO:0007669"/>
    <property type="project" value="TreeGrafter"/>
</dbReference>
<dbReference type="GO" id="GO:0010125">
    <property type="term" value="P:mycothiol biosynthetic process"/>
    <property type="evidence" value="ECO:0007669"/>
    <property type="project" value="UniProtKB-UniRule"/>
</dbReference>
<dbReference type="Gene3D" id="1.20.120.640">
    <property type="entry name" value="Anticodon-binding domain of a subclass of class I aminoacyl-tRNA synthetases"/>
    <property type="match status" value="1"/>
</dbReference>
<dbReference type="Gene3D" id="3.40.50.620">
    <property type="entry name" value="HUPs"/>
    <property type="match status" value="1"/>
</dbReference>
<dbReference type="HAMAP" id="MF_01697">
    <property type="entry name" value="MshC"/>
    <property type="match status" value="1"/>
</dbReference>
<dbReference type="InterPro" id="IPR024909">
    <property type="entry name" value="Cys-tRNA/MSH_ligase"/>
</dbReference>
<dbReference type="InterPro" id="IPR017812">
    <property type="entry name" value="Mycothiol_ligase_MshC"/>
</dbReference>
<dbReference type="InterPro" id="IPR014729">
    <property type="entry name" value="Rossmann-like_a/b/a_fold"/>
</dbReference>
<dbReference type="InterPro" id="IPR032678">
    <property type="entry name" value="tRNA-synt_1_cat_dom"/>
</dbReference>
<dbReference type="NCBIfam" id="TIGR03447">
    <property type="entry name" value="mycothiol_MshC"/>
    <property type="match status" value="1"/>
</dbReference>
<dbReference type="PANTHER" id="PTHR10890:SF3">
    <property type="entry name" value="CYSTEINE--TRNA LIGASE, CYTOPLASMIC"/>
    <property type="match status" value="1"/>
</dbReference>
<dbReference type="PANTHER" id="PTHR10890">
    <property type="entry name" value="CYSTEINYL-TRNA SYNTHETASE"/>
    <property type="match status" value="1"/>
</dbReference>
<dbReference type="Pfam" id="PF01406">
    <property type="entry name" value="tRNA-synt_1e"/>
    <property type="match status" value="1"/>
</dbReference>
<dbReference type="PRINTS" id="PR00983">
    <property type="entry name" value="TRNASYNTHCYS"/>
</dbReference>
<dbReference type="SUPFAM" id="SSF52374">
    <property type="entry name" value="Nucleotidylyl transferase"/>
    <property type="match status" value="1"/>
</dbReference>
<gene>
    <name evidence="1" type="primary">mshC</name>
    <name type="ordered locus">Sked_20970</name>
</gene>
<proteinExistence type="inferred from homology"/>
<accession>D1BHU9</accession>
<sequence length="425" mass="44677">MLTWPAPQIPELPGRGDVVRVHDSSTGRLVVAAEGPSASLYVCGITPYDATHIGHAATYVAFDLLGRAWRDAGQQVTYASNVTDVDDPLLERATATGVEWQDLAVEQTALFAEDMTALGVVPPDVYLGAVETIPPVAAAVEELVAAGAAYRVPLEEGAGGDAPALGDVYADVTADSAFGQVSRMDEATMLELFAERGGDPGRAGKRNALDPLLWRRERPGEPAWEAGSLGTGRPGWHIECAVIARAGLGLPFDVQGGGSDLLFPHHEMSTSHARLIGDGDVHGVGAATHVHAGLVGYQGEKMSKSRGNLVFVSRLRAEGVEPMAIRLALLAHHYRSDWEWTDASLTEGVARFETWRSAVSGNGGPDADATLAEVRAALADDLDAPRALAAVDRWAELSLAGTEKPVEGAPGVVSRAVNALLGVRL</sequence>
<comment type="function">
    <text evidence="1">Catalyzes the ATP-dependent condensation of GlcN-Ins and L-cysteine to form L-Cys-GlcN-Ins.</text>
</comment>
<comment type="catalytic activity">
    <reaction evidence="1">
        <text>1D-myo-inositol 2-amino-2-deoxy-alpha-D-glucopyranoside + L-cysteine + ATP = 1D-myo-inositol 2-(L-cysteinylamino)-2-deoxy-alpha-D-glucopyranoside + AMP + diphosphate + H(+)</text>
        <dbReference type="Rhea" id="RHEA:26176"/>
        <dbReference type="ChEBI" id="CHEBI:15378"/>
        <dbReference type="ChEBI" id="CHEBI:30616"/>
        <dbReference type="ChEBI" id="CHEBI:33019"/>
        <dbReference type="ChEBI" id="CHEBI:35235"/>
        <dbReference type="ChEBI" id="CHEBI:58886"/>
        <dbReference type="ChEBI" id="CHEBI:58887"/>
        <dbReference type="ChEBI" id="CHEBI:456215"/>
        <dbReference type="EC" id="6.3.1.13"/>
    </reaction>
</comment>
<comment type="cofactor">
    <cofactor evidence="1">
        <name>Zn(2+)</name>
        <dbReference type="ChEBI" id="CHEBI:29105"/>
    </cofactor>
    <text evidence="1">Binds 1 zinc ion per subunit.</text>
</comment>
<comment type="subunit">
    <text evidence="1">Monomer.</text>
</comment>
<comment type="similarity">
    <text evidence="1">Belongs to the class-I aminoacyl-tRNA synthetase family. MshC subfamily.</text>
</comment>
<reference key="1">
    <citation type="journal article" date="2009" name="Stand. Genomic Sci.">
        <title>Complete genome sequence of Sanguibacter keddieii type strain (ST-74).</title>
        <authorList>
            <person name="Ivanova N."/>
            <person name="Sikorski J."/>
            <person name="Sims D."/>
            <person name="Brettin T."/>
            <person name="Detter J.C."/>
            <person name="Han C."/>
            <person name="Lapidus A."/>
            <person name="Copeland A."/>
            <person name="Glavina Del Rio T."/>
            <person name="Nolan M."/>
            <person name="Chen F."/>
            <person name="Lucas S."/>
            <person name="Tice H."/>
            <person name="Cheng J.F."/>
            <person name="Bruce D."/>
            <person name="Goodwin L."/>
            <person name="Pitluck S."/>
            <person name="Pati A."/>
            <person name="Mavromatis K."/>
            <person name="Chen A."/>
            <person name="Palaniappan K."/>
            <person name="D'haeseleer P."/>
            <person name="Chain P."/>
            <person name="Bristow J."/>
            <person name="Eisen J.A."/>
            <person name="Markowitz V."/>
            <person name="Hugenholtz P."/>
            <person name="Goker M."/>
            <person name="Pukall R."/>
            <person name="Klenk H.P."/>
            <person name="Kyrpides N.C."/>
        </authorList>
    </citation>
    <scope>NUCLEOTIDE SEQUENCE [LARGE SCALE GENOMIC DNA]</scope>
    <source>
        <strain>ATCC 51767 / DSM 10542 / NCFB 3025 / ST-74</strain>
    </source>
</reference>
<evidence type="ECO:0000255" key="1">
    <source>
        <dbReference type="HAMAP-Rule" id="MF_01697"/>
    </source>
</evidence>
<protein>
    <recommendedName>
        <fullName evidence="1">L-cysteine:1D-myo-inositol 2-amino-2-deoxy-alpha-D-glucopyranoside ligase</fullName>
        <shortName evidence="1">L-Cys:GlcN-Ins ligase</shortName>
        <ecNumber evidence="1">6.3.1.13</ecNumber>
    </recommendedName>
    <alternativeName>
        <fullName evidence="1">Mycothiol ligase</fullName>
        <shortName evidence="1">MSH ligase</shortName>
    </alternativeName>
</protein>
<keyword id="KW-0067">ATP-binding</keyword>
<keyword id="KW-0436">Ligase</keyword>
<keyword id="KW-0479">Metal-binding</keyword>
<keyword id="KW-0547">Nucleotide-binding</keyword>
<keyword id="KW-0862">Zinc</keyword>
<name>MSHC_SANKS</name>
<feature type="chain" id="PRO_0000400483" description="L-cysteine:1D-myo-inositol 2-amino-2-deoxy-alpha-D-glucopyranoside ligase">
    <location>
        <begin position="1"/>
        <end position="425"/>
    </location>
</feature>
<feature type="short sequence motif" description="'HIGH' region" evidence="1">
    <location>
        <begin position="45"/>
        <end position="55"/>
    </location>
</feature>
<feature type="short sequence motif" description="'ERGGDP' region" evidence="1">
    <location>
        <begin position="195"/>
        <end position="200"/>
    </location>
</feature>
<feature type="short sequence motif" description="'KMSKS' region" evidence="1">
    <location>
        <begin position="301"/>
        <end position="305"/>
    </location>
</feature>
<feature type="binding site" evidence="1">
    <location>
        <begin position="43"/>
        <end position="46"/>
    </location>
    <ligand>
        <name>L-cysteinyl-5'-AMP</name>
        <dbReference type="ChEBI" id="CHEBI:144924"/>
    </ligand>
</feature>
<feature type="binding site" evidence="1">
    <location>
        <position position="43"/>
    </location>
    <ligand>
        <name>Zn(2+)</name>
        <dbReference type="ChEBI" id="CHEBI:29105"/>
    </ligand>
</feature>
<feature type="binding site" evidence="1">
    <location>
        <position position="58"/>
    </location>
    <ligand>
        <name>L-cysteinyl-5'-AMP</name>
        <dbReference type="ChEBI" id="CHEBI:144924"/>
    </ligand>
</feature>
<feature type="binding site" evidence="1">
    <location>
        <begin position="81"/>
        <end position="83"/>
    </location>
    <ligand>
        <name>L-cysteinyl-5'-AMP</name>
        <dbReference type="ChEBI" id="CHEBI:144924"/>
    </ligand>
</feature>
<feature type="binding site" evidence="1">
    <location>
        <position position="236"/>
    </location>
    <ligand>
        <name>L-cysteinyl-5'-AMP</name>
        <dbReference type="ChEBI" id="CHEBI:144924"/>
    </ligand>
</feature>
<feature type="binding site" evidence="1">
    <location>
        <position position="240"/>
    </location>
    <ligand>
        <name>Zn(2+)</name>
        <dbReference type="ChEBI" id="CHEBI:29105"/>
    </ligand>
</feature>
<feature type="binding site" evidence="1">
    <location>
        <begin position="258"/>
        <end position="260"/>
    </location>
    <ligand>
        <name>L-cysteinyl-5'-AMP</name>
        <dbReference type="ChEBI" id="CHEBI:144924"/>
    </ligand>
</feature>
<feature type="binding site" evidence="1">
    <location>
        <position position="265"/>
    </location>
    <ligand>
        <name>Zn(2+)</name>
        <dbReference type="ChEBI" id="CHEBI:29105"/>
    </ligand>
</feature>
<feature type="binding site" evidence="1">
    <location>
        <position position="295"/>
    </location>
    <ligand>
        <name>L-cysteinyl-5'-AMP</name>
        <dbReference type="ChEBI" id="CHEBI:144924"/>
    </ligand>
</feature>
<organism>
    <name type="scientific">Sanguibacter keddieii (strain ATCC 51767 / DSM 10542 / NCFB 3025 / ST-74)</name>
    <dbReference type="NCBI Taxonomy" id="446469"/>
    <lineage>
        <taxon>Bacteria</taxon>
        <taxon>Bacillati</taxon>
        <taxon>Actinomycetota</taxon>
        <taxon>Actinomycetes</taxon>
        <taxon>Micrococcales</taxon>
        <taxon>Sanguibacteraceae</taxon>
        <taxon>Sanguibacter</taxon>
    </lineage>
</organism>